<protein>
    <recommendedName>
        <fullName>Snaclec alboluxin subunit beta</fullName>
    </recommendedName>
</protein>
<accession>P0DJL1</accession>
<organism>
    <name type="scientific">Trimeresurus albolabris</name>
    <name type="common">White-lipped pit viper</name>
    <name type="synonym">Cryptelytrops albolabris</name>
    <dbReference type="NCBI Taxonomy" id="8765"/>
    <lineage>
        <taxon>Eukaryota</taxon>
        <taxon>Metazoa</taxon>
        <taxon>Chordata</taxon>
        <taxon>Craniata</taxon>
        <taxon>Vertebrata</taxon>
        <taxon>Euteleostomi</taxon>
        <taxon>Lepidosauria</taxon>
        <taxon>Squamata</taxon>
        <taxon>Bifurcata</taxon>
        <taxon>Unidentata</taxon>
        <taxon>Episquamata</taxon>
        <taxon>Toxicofera</taxon>
        <taxon>Serpentes</taxon>
        <taxon>Colubroidea</taxon>
        <taxon>Viperidae</taxon>
        <taxon>Crotalinae</taxon>
        <taxon>Trimeresurus</taxon>
    </lineage>
</organism>
<evidence type="ECO:0000255" key="1">
    <source>
        <dbReference type="PROSITE-ProRule" id="PRU00040"/>
    </source>
</evidence>
<evidence type="ECO:0000269" key="2">
    <source>
    </source>
</evidence>
<evidence type="ECO:0000305" key="3"/>
<evidence type="ECO:0000305" key="4">
    <source>
    </source>
</evidence>
<feature type="chain" id="PRO_0000422427" description="Snaclec alboluxin subunit beta">
    <location>
        <begin position="1"/>
        <end position="12" status="greater than"/>
    </location>
</feature>
<feature type="domain" description="C-type lectin" evidence="1">
    <location>
        <begin position="11"/>
        <end position="12" status="greater than"/>
    </location>
</feature>
<feature type="disulfide bond" evidence="1">
    <location>
        <begin position="4"/>
        <end status="unknown"/>
    </location>
</feature>
<feature type="non-terminal residue">
    <location>
        <position position="12"/>
    </location>
</feature>
<name>SLB_TRIAB</name>
<dbReference type="GO" id="GO:0005576">
    <property type="term" value="C:extracellular region"/>
    <property type="evidence" value="ECO:0000314"/>
    <property type="project" value="UniProtKB"/>
</dbReference>
<dbReference type="GO" id="GO:0044218">
    <property type="term" value="C:other organism cell membrane"/>
    <property type="evidence" value="ECO:0000314"/>
    <property type="project" value="UniProtKB"/>
</dbReference>
<dbReference type="GO" id="GO:0090729">
    <property type="term" value="F:toxin activity"/>
    <property type="evidence" value="ECO:0007669"/>
    <property type="project" value="UniProtKB-KW"/>
</dbReference>
<dbReference type="GO" id="GO:0044478">
    <property type="term" value="P:venom-mediated platelet aggregation"/>
    <property type="evidence" value="ECO:0000314"/>
    <property type="project" value="UniProtKB"/>
</dbReference>
<keyword id="KW-0903">Direct protein sequencing</keyword>
<keyword id="KW-1015">Disulfide bond</keyword>
<keyword id="KW-1199">Hemostasis impairing toxin</keyword>
<keyword id="KW-1202">Platelet aggregation activating toxin</keyword>
<keyword id="KW-0964">Secreted</keyword>
<keyword id="KW-0800">Toxin</keyword>
<reference key="1">
    <citation type="journal article" date="2002" name="Thromb. Haemost.">
        <title>Alboluxin, a snake C-type lectin from Trimeresurus albolabris venom is a potent platelet agonist acting via GPIb and GPVI.</title>
        <authorList>
            <person name="Du X.-Y."/>
            <person name="Magnenat E."/>
            <person name="Wells T.N.C."/>
            <person name="Clemetson K.J."/>
        </authorList>
    </citation>
    <scope>PROTEIN SEQUENCE</scope>
    <scope>FUNCTION</scope>
    <scope>SUBUNIT</scope>
    <source>
        <tissue>Venom</tissue>
    </source>
</reference>
<sequence length="12" mass="1478">NFSCPPDWYAYD</sequence>
<comment type="function">
    <text evidence="2">Potent platelet activator that aggregates platelets via both GPIb (GP1BA/GP1BB) and GPVI (GP6). Alboluxin induces a tyrosine phosphorylation profile in platelets that resembles those produced by collagen and convulxin, involving the time dependent tyrosine phosphorylation of Fc receptor gamma chain (FCGR1A), phospholipase Cgamma2 (PLCG2), LAT and p72SYK. Inhibition of alpha-IIb/beta-3 reduces the aggregation response to alboluxin, as well as tyrosine phosphorylation of platelet proteins, showing that activation of alpha-IIb/beta-3 and binding of fibrinogen are involved in alboluxin-induced platelet aggregation and it is not simply agglutination.</text>
</comment>
<comment type="subunit">
    <text evidence="2">Trimer of 3 heterodimers of alpha and beta subunits; disulfide-linked.</text>
</comment>
<comment type="subcellular location">
    <subcellularLocation>
        <location>Secreted</location>
    </subcellularLocation>
</comment>
<comment type="tissue specificity">
    <text>Expressed by the venom gland.</text>
</comment>
<comment type="PTM">
    <text evidence="2">The complex may be glycosylated.</text>
</comment>
<comment type="miscellaneous">
    <text evidence="4">May not activate platelet via the integrin alpha-2/beta-1, since antibodies against this integrin have no effect.</text>
</comment>
<comment type="similarity">
    <text evidence="3">Belongs to the snaclec family.</text>
</comment>
<comment type="caution">
    <text evidence="4">The subunit alpha may be blocked, since it was impossible to sequence.</text>
</comment>
<proteinExistence type="evidence at protein level"/>